<accession>P26159</accession>
<reference key="1">
    <citation type="submission" date="1991-11" db="EMBL/GenBank/DDBJ databases">
        <authorList>
            <person name="Burke D.H."/>
            <person name="Alberti M."/>
            <person name="Armstrong G.A."/>
            <person name="Hearst J.E."/>
        </authorList>
    </citation>
    <scope>NUCLEOTIDE SEQUENCE [GENOMIC DNA]</scope>
</reference>
<dbReference type="EMBL" id="Z11165">
    <property type="protein sequence ID" value="CAA77517.1"/>
    <property type="molecule type" value="Genomic_DNA"/>
</dbReference>
<dbReference type="PIR" id="S17805">
    <property type="entry name" value="S17805"/>
</dbReference>
<organism>
    <name type="scientific">Rhodobacter capsulatus</name>
    <name type="common">Rhodopseudomonas capsulata</name>
    <dbReference type="NCBI Taxonomy" id="1061"/>
    <lineage>
        <taxon>Bacteria</taxon>
        <taxon>Pseudomonadati</taxon>
        <taxon>Pseudomonadota</taxon>
        <taxon>Alphaproteobacteria</taxon>
        <taxon>Rhodobacterales</taxon>
        <taxon>Rhodobacter group</taxon>
        <taxon>Rhodobacter</taxon>
    </lineage>
</organism>
<evidence type="ECO:0000256" key="1">
    <source>
        <dbReference type="SAM" id="MobiDB-lite"/>
    </source>
</evidence>
<feature type="chain" id="PRO_0000066421" description="Uncharacterized 5.8 kDa protein in puhA 5'region">
    <location>
        <begin position="1"/>
        <end position="55"/>
    </location>
</feature>
<feature type="region of interest" description="Disordered" evidence="1">
    <location>
        <begin position="1"/>
        <end position="22"/>
    </location>
</feature>
<name>YPU3_RHOCA</name>
<sequence>MPALKSHVRPNSAAPARRQPWPCGSCVTAPVAVRIGAMGASPGPARRPHHRGCRA</sequence>
<protein>
    <recommendedName>
        <fullName>Uncharacterized 5.8 kDa protein in puhA 5'region</fullName>
    </recommendedName>
    <alternativeName>
        <fullName>ORF55</fullName>
    </alternativeName>
</protein>
<proteinExistence type="predicted"/>